<organism>
    <name type="scientific">Streptococcus suis (strain 98HAH33)</name>
    <dbReference type="NCBI Taxonomy" id="391296"/>
    <lineage>
        <taxon>Bacteria</taxon>
        <taxon>Bacillati</taxon>
        <taxon>Bacillota</taxon>
        <taxon>Bacilli</taxon>
        <taxon>Lactobacillales</taxon>
        <taxon>Streptococcaceae</taxon>
        <taxon>Streptococcus</taxon>
    </lineage>
</organism>
<sequence>MAKEKYDRSKPHVNIGTIGHVDHGKTTLTAAITTVLARRLPSSVNQPKDYASIDAAPEERERGITINTAHVEYETEKRHYAHIDAPGHADYVKNMITGAAQMDGAILVVASTDGPMPQTREHILLSRQVGVKHLIVFMNKVDLVDDEELLELVEMEIRDLLSEYDFPGDDLPVIQGSALKALEGDSKYEDIVMELMNTVDEYIPEPERDTDKPLLLPVEDVFSITGRGTVASGRIDRGTVRVNDEIEIVGLQEEKSKAVVTGVEMFRKQLDEGLAGDNVGVLLRGVQRDEIERGQVISKPGSINPHTKFKGEVYILTKEEGGRHTPFFDNYRPQFYFRTTDVTGSIKLPEGTEMVMPGDNVTIDVELIHPIAVEQGTTFSIREGGRTVGSGMVTEIEA</sequence>
<evidence type="ECO:0000250" key="1"/>
<evidence type="ECO:0000255" key="2">
    <source>
        <dbReference type="HAMAP-Rule" id="MF_00118"/>
    </source>
</evidence>
<evidence type="ECO:0000305" key="3"/>
<comment type="function">
    <text evidence="2">GTP hydrolase that promotes the GTP-dependent binding of aminoacyl-tRNA to the A-site of ribosomes during protein biosynthesis.</text>
</comment>
<comment type="catalytic activity">
    <reaction evidence="2">
        <text>GTP + H2O = GDP + phosphate + H(+)</text>
        <dbReference type="Rhea" id="RHEA:19669"/>
        <dbReference type="ChEBI" id="CHEBI:15377"/>
        <dbReference type="ChEBI" id="CHEBI:15378"/>
        <dbReference type="ChEBI" id="CHEBI:37565"/>
        <dbReference type="ChEBI" id="CHEBI:43474"/>
        <dbReference type="ChEBI" id="CHEBI:58189"/>
        <dbReference type="EC" id="3.6.5.3"/>
    </reaction>
    <physiologicalReaction direction="left-to-right" evidence="2">
        <dbReference type="Rhea" id="RHEA:19670"/>
    </physiologicalReaction>
</comment>
<comment type="subunit">
    <text evidence="2">Monomer.</text>
</comment>
<comment type="subcellular location">
    <subcellularLocation>
        <location evidence="2">Cytoplasm</location>
    </subcellularLocation>
</comment>
<comment type="similarity">
    <text evidence="2">Belongs to the TRAFAC class translation factor GTPase superfamily. Classic translation factor GTPase family. EF-Tu/EF-1A subfamily.</text>
</comment>
<comment type="sequence caution" evidence="3">
    <conflict type="erroneous initiation">
        <sequence resource="EMBL-CDS" id="ABP91682"/>
    </conflict>
</comment>
<proteinExistence type="inferred from homology"/>
<accession>A4VZZ3</accession>
<dbReference type="EC" id="3.6.5.3" evidence="2"/>
<dbReference type="EMBL" id="CP000408">
    <property type="protein sequence ID" value="ABP91682.1"/>
    <property type="status" value="ALT_INIT"/>
    <property type="molecule type" value="Genomic_DNA"/>
</dbReference>
<dbReference type="SMR" id="A4VZZ3"/>
<dbReference type="KEGG" id="ssv:SSU98_0524"/>
<dbReference type="HOGENOM" id="CLU_007265_0_1_9"/>
<dbReference type="GO" id="GO:0005829">
    <property type="term" value="C:cytosol"/>
    <property type="evidence" value="ECO:0007669"/>
    <property type="project" value="TreeGrafter"/>
</dbReference>
<dbReference type="GO" id="GO:0005525">
    <property type="term" value="F:GTP binding"/>
    <property type="evidence" value="ECO:0007669"/>
    <property type="project" value="UniProtKB-UniRule"/>
</dbReference>
<dbReference type="GO" id="GO:0003924">
    <property type="term" value="F:GTPase activity"/>
    <property type="evidence" value="ECO:0007669"/>
    <property type="project" value="InterPro"/>
</dbReference>
<dbReference type="GO" id="GO:0003746">
    <property type="term" value="F:translation elongation factor activity"/>
    <property type="evidence" value="ECO:0007669"/>
    <property type="project" value="UniProtKB-UniRule"/>
</dbReference>
<dbReference type="CDD" id="cd01884">
    <property type="entry name" value="EF_Tu"/>
    <property type="match status" value="1"/>
</dbReference>
<dbReference type="CDD" id="cd03697">
    <property type="entry name" value="EFTU_II"/>
    <property type="match status" value="1"/>
</dbReference>
<dbReference type="CDD" id="cd03707">
    <property type="entry name" value="EFTU_III"/>
    <property type="match status" value="1"/>
</dbReference>
<dbReference type="FunFam" id="2.40.30.10:FF:000001">
    <property type="entry name" value="Elongation factor Tu"/>
    <property type="match status" value="1"/>
</dbReference>
<dbReference type="FunFam" id="3.40.50.300:FF:000003">
    <property type="entry name" value="Elongation factor Tu"/>
    <property type="match status" value="1"/>
</dbReference>
<dbReference type="Gene3D" id="3.40.50.300">
    <property type="entry name" value="P-loop containing nucleotide triphosphate hydrolases"/>
    <property type="match status" value="1"/>
</dbReference>
<dbReference type="Gene3D" id="2.40.30.10">
    <property type="entry name" value="Translation factors"/>
    <property type="match status" value="2"/>
</dbReference>
<dbReference type="HAMAP" id="MF_00118_B">
    <property type="entry name" value="EF_Tu_B"/>
    <property type="match status" value="1"/>
</dbReference>
<dbReference type="InterPro" id="IPR041709">
    <property type="entry name" value="EF-Tu_GTP-bd"/>
</dbReference>
<dbReference type="InterPro" id="IPR050055">
    <property type="entry name" value="EF-Tu_GTPase"/>
</dbReference>
<dbReference type="InterPro" id="IPR004161">
    <property type="entry name" value="EFTu-like_2"/>
</dbReference>
<dbReference type="InterPro" id="IPR033720">
    <property type="entry name" value="EFTU_2"/>
</dbReference>
<dbReference type="InterPro" id="IPR031157">
    <property type="entry name" value="G_TR_CS"/>
</dbReference>
<dbReference type="InterPro" id="IPR027417">
    <property type="entry name" value="P-loop_NTPase"/>
</dbReference>
<dbReference type="InterPro" id="IPR005225">
    <property type="entry name" value="Small_GTP-bd"/>
</dbReference>
<dbReference type="InterPro" id="IPR000795">
    <property type="entry name" value="T_Tr_GTP-bd_dom"/>
</dbReference>
<dbReference type="InterPro" id="IPR009000">
    <property type="entry name" value="Transl_B-barrel_sf"/>
</dbReference>
<dbReference type="InterPro" id="IPR009001">
    <property type="entry name" value="Transl_elong_EF1A/Init_IF2_C"/>
</dbReference>
<dbReference type="InterPro" id="IPR004541">
    <property type="entry name" value="Transl_elong_EFTu/EF1A_bac/org"/>
</dbReference>
<dbReference type="InterPro" id="IPR004160">
    <property type="entry name" value="Transl_elong_EFTu/EF1A_C"/>
</dbReference>
<dbReference type="NCBIfam" id="TIGR00485">
    <property type="entry name" value="EF-Tu"/>
    <property type="match status" value="1"/>
</dbReference>
<dbReference type="NCBIfam" id="NF000766">
    <property type="entry name" value="PRK00049.1"/>
    <property type="match status" value="1"/>
</dbReference>
<dbReference type="NCBIfam" id="NF009372">
    <property type="entry name" value="PRK12735.1"/>
    <property type="match status" value="1"/>
</dbReference>
<dbReference type="NCBIfam" id="NF009373">
    <property type="entry name" value="PRK12736.1"/>
    <property type="match status" value="1"/>
</dbReference>
<dbReference type="NCBIfam" id="TIGR00231">
    <property type="entry name" value="small_GTP"/>
    <property type="match status" value="1"/>
</dbReference>
<dbReference type="PANTHER" id="PTHR43721:SF22">
    <property type="entry name" value="ELONGATION FACTOR TU, MITOCHONDRIAL"/>
    <property type="match status" value="1"/>
</dbReference>
<dbReference type="PANTHER" id="PTHR43721">
    <property type="entry name" value="ELONGATION FACTOR TU-RELATED"/>
    <property type="match status" value="1"/>
</dbReference>
<dbReference type="Pfam" id="PF00009">
    <property type="entry name" value="GTP_EFTU"/>
    <property type="match status" value="1"/>
</dbReference>
<dbReference type="Pfam" id="PF03144">
    <property type="entry name" value="GTP_EFTU_D2"/>
    <property type="match status" value="1"/>
</dbReference>
<dbReference type="Pfam" id="PF03143">
    <property type="entry name" value="GTP_EFTU_D3"/>
    <property type="match status" value="1"/>
</dbReference>
<dbReference type="PRINTS" id="PR00315">
    <property type="entry name" value="ELONGATNFCT"/>
</dbReference>
<dbReference type="SUPFAM" id="SSF50465">
    <property type="entry name" value="EF-Tu/eEF-1alpha/eIF2-gamma C-terminal domain"/>
    <property type="match status" value="1"/>
</dbReference>
<dbReference type="SUPFAM" id="SSF52540">
    <property type="entry name" value="P-loop containing nucleoside triphosphate hydrolases"/>
    <property type="match status" value="1"/>
</dbReference>
<dbReference type="SUPFAM" id="SSF50447">
    <property type="entry name" value="Translation proteins"/>
    <property type="match status" value="1"/>
</dbReference>
<dbReference type="PROSITE" id="PS00301">
    <property type="entry name" value="G_TR_1"/>
    <property type="match status" value="1"/>
</dbReference>
<dbReference type="PROSITE" id="PS51722">
    <property type="entry name" value="G_TR_2"/>
    <property type="match status" value="1"/>
</dbReference>
<gene>
    <name evidence="2" type="primary">tuf</name>
    <name type="ordered locus">SSU98_0524</name>
</gene>
<reference key="1">
    <citation type="journal article" date="2007" name="PLoS ONE">
        <title>A glimpse of streptococcal toxic shock syndrome from comparative genomics of S. suis 2 Chinese isolates.</title>
        <authorList>
            <person name="Chen C."/>
            <person name="Tang J."/>
            <person name="Dong W."/>
            <person name="Wang C."/>
            <person name="Feng Y."/>
            <person name="Wang J."/>
            <person name="Zheng F."/>
            <person name="Pan X."/>
            <person name="Liu D."/>
            <person name="Li M."/>
            <person name="Song Y."/>
            <person name="Zhu X."/>
            <person name="Sun H."/>
            <person name="Feng T."/>
            <person name="Guo Z."/>
            <person name="Ju A."/>
            <person name="Ge J."/>
            <person name="Dong Y."/>
            <person name="Sun W."/>
            <person name="Jiang Y."/>
            <person name="Wang J."/>
            <person name="Yan J."/>
            <person name="Yang H."/>
            <person name="Wang X."/>
            <person name="Gao G.F."/>
            <person name="Yang R."/>
            <person name="Wang J."/>
            <person name="Yu J."/>
        </authorList>
    </citation>
    <scope>NUCLEOTIDE SEQUENCE [LARGE SCALE GENOMIC DNA]</scope>
    <source>
        <strain>98HAH33</strain>
    </source>
</reference>
<protein>
    <recommendedName>
        <fullName evidence="2">Elongation factor Tu</fullName>
        <shortName evidence="2">EF-Tu</shortName>
        <ecNumber evidence="2">3.6.5.3</ecNumber>
    </recommendedName>
</protein>
<feature type="chain" id="PRO_0000337556" description="Elongation factor Tu">
    <location>
        <begin position="1"/>
        <end position="398"/>
    </location>
</feature>
<feature type="domain" description="tr-type G">
    <location>
        <begin position="10"/>
        <end position="207"/>
    </location>
</feature>
<feature type="region of interest" description="G1" evidence="1">
    <location>
        <begin position="19"/>
        <end position="26"/>
    </location>
</feature>
<feature type="region of interest" description="G2" evidence="1">
    <location>
        <begin position="63"/>
        <end position="67"/>
    </location>
</feature>
<feature type="region of interest" description="G3" evidence="1">
    <location>
        <begin position="84"/>
        <end position="87"/>
    </location>
</feature>
<feature type="region of interest" description="G4" evidence="1">
    <location>
        <begin position="139"/>
        <end position="142"/>
    </location>
</feature>
<feature type="region of interest" description="G5" evidence="1">
    <location>
        <begin position="177"/>
        <end position="179"/>
    </location>
</feature>
<feature type="binding site" evidence="2">
    <location>
        <begin position="19"/>
        <end position="26"/>
    </location>
    <ligand>
        <name>GTP</name>
        <dbReference type="ChEBI" id="CHEBI:37565"/>
    </ligand>
</feature>
<feature type="binding site" evidence="2">
    <location>
        <position position="26"/>
    </location>
    <ligand>
        <name>Mg(2+)</name>
        <dbReference type="ChEBI" id="CHEBI:18420"/>
    </ligand>
</feature>
<feature type="binding site" evidence="2">
    <location>
        <begin position="84"/>
        <end position="88"/>
    </location>
    <ligand>
        <name>GTP</name>
        <dbReference type="ChEBI" id="CHEBI:37565"/>
    </ligand>
</feature>
<feature type="binding site" evidence="2">
    <location>
        <begin position="139"/>
        <end position="142"/>
    </location>
    <ligand>
        <name>GTP</name>
        <dbReference type="ChEBI" id="CHEBI:37565"/>
    </ligand>
</feature>
<keyword id="KW-0963">Cytoplasm</keyword>
<keyword id="KW-0251">Elongation factor</keyword>
<keyword id="KW-0342">GTP-binding</keyword>
<keyword id="KW-0378">Hydrolase</keyword>
<keyword id="KW-0460">Magnesium</keyword>
<keyword id="KW-0479">Metal-binding</keyword>
<keyword id="KW-0547">Nucleotide-binding</keyword>
<keyword id="KW-0648">Protein biosynthesis</keyword>
<name>EFTU_STRS2</name>